<organism>
    <name type="scientific">Homo sapiens</name>
    <name type="common">Human</name>
    <dbReference type="NCBI Taxonomy" id="9606"/>
    <lineage>
        <taxon>Eukaryota</taxon>
        <taxon>Metazoa</taxon>
        <taxon>Chordata</taxon>
        <taxon>Craniata</taxon>
        <taxon>Vertebrata</taxon>
        <taxon>Euteleostomi</taxon>
        <taxon>Mammalia</taxon>
        <taxon>Eutheria</taxon>
        <taxon>Euarchontoglires</taxon>
        <taxon>Primates</taxon>
        <taxon>Haplorrhini</taxon>
        <taxon>Catarrhini</taxon>
        <taxon>Hominidae</taxon>
        <taxon>Homo</taxon>
    </lineage>
</organism>
<evidence type="ECO:0000255" key="1"/>
<evidence type="ECO:0000255" key="2">
    <source>
        <dbReference type="PROSITE-ProRule" id="PRU00521"/>
    </source>
</evidence>
<evidence type="ECO:0000305" key="3"/>
<protein>
    <recommendedName>
        <fullName>Olfactory receptor 10J4</fullName>
    </recommendedName>
</protein>
<feature type="chain" id="PRO_0000315279" description="Olfactory receptor 10J4">
    <location>
        <begin position="1"/>
        <end position="311"/>
    </location>
</feature>
<feature type="topological domain" description="Extracellular" evidence="1">
    <location>
        <begin position="1"/>
        <end position="29"/>
    </location>
</feature>
<feature type="transmembrane region" description="Helical; Name=1" evidence="1">
    <location>
        <begin position="30"/>
        <end position="50"/>
    </location>
</feature>
<feature type="topological domain" description="Cytoplasmic" evidence="1">
    <location>
        <begin position="51"/>
        <end position="57"/>
    </location>
</feature>
<feature type="transmembrane region" description="Helical; Name=2" evidence="1">
    <location>
        <begin position="58"/>
        <end position="78"/>
    </location>
</feature>
<feature type="topological domain" description="Extracellular" evidence="1">
    <location>
        <begin position="79"/>
        <end position="98"/>
    </location>
</feature>
<feature type="transmembrane region" description="Helical; Name=3" evidence="1">
    <location>
        <begin position="99"/>
        <end position="119"/>
    </location>
</feature>
<feature type="topological domain" description="Cytoplasmic" evidence="1">
    <location>
        <begin position="120"/>
        <end position="149"/>
    </location>
</feature>
<feature type="transmembrane region" description="Helical; Name=4" evidence="1">
    <location>
        <begin position="150"/>
        <end position="170"/>
    </location>
</feature>
<feature type="topological domain" description="Extracellular" evidence="1">
    <location>
        <begin position="171"/>
        <end position="202"/>
    </location>
</feature>
<feature type="transmembrane region" description="Helical; Name=5" evidence="1">
    <location>
        <begin position="203"/>
        <end position="223"/>
    </location>
</feature>
<feature type="topological domain" description="Cytoplasmic" evidence="1">
    <location>
        <begin position="224"/>
        <end position="237"/>
    </location>
</feature>
<feature type="transmembrane region" description="Helical; Name=6" evidence="1">
    <location>
        <begin position="238"/>
        <end position="254"/>
    </location>
</feature>
<feature type="topological domain" description="Extracellular" evidence="1">
    <location>
        <begin position="255"/>
        <end position="272"/>
    </location>
</feature>
<feature type="transmembrane region" description="Helical; Name=7" evidence="1">
    <location>
        <begin position="273"/>
        <end position="292"/>
    </location>
</feature>
<feature type="topological domain" description="Cytoplasmic" evidence="1">
    <location>
        <begin position="293"/>
        <end position="311"/>
    </location>
</feature>
<feature type="disulfide bond" evidence="2">
    <location>
        <begin position="98"/>
        <end position="180"/>
    </location>
</feature>
<proteinExistence type="inferred from homology"/>
<dbReference type="EMBL" id="AL663023">
    <property type="status" value="NOT_ANNOTATED_CDS"/>
    <property type="molecule type" value="Genomic_DNA"/>
</dbReference>
<dbReference type="EMBL" id="AF399454">
    <property type="status" value="NOT_ANNOTATED_CDS"/>
    <property type="molecule type" value="Genomic_DNA"/>
</dbReference>
<dbReference type="RefSeq" id="NP_001335215.2">
    <property type="nucleotide sequence ID" value="NM_001348286.3"/>
</dbReference>
<dbReference type="SMR" id="P0C629"/>
<dbReference type="GlyGen" id="P0C629">
    <property type="glycosylation" value="1 site, 1 O-linked glycan (1 site)"/>
</dbReference>
<dbReference type="BioMuta" id="OR10J4"/>
<dbReference type="DMDM" id="166215743"/>
<dbReference type="ProteomicsDB" id="52320"/>
<dbReference type="Ensembl" id="ENST00000710315.1">
    <property type="protein sequence ID" value="ENSP00000518196.1"/>
    <property type="gene ID" value="ENSG00000292247.1"/>
</dbReference>
<dbReference type="GeneID" id="391121"/>
<dbReference type="MANE-Select" id="ENST00000710315.1">
    <property type="protein sequence ID" value="ENSP00000518196.1"/>
    <property type="RefSeq nucleotide sequence ID" value="NM_001348286.3"/>
    <property type="RefSeq protein sequence ID" value="NP_001335215.2"/>
</dbReference>
<dbReference type="AGR" id="HGNC:15408"/>
<dbReference type="GeneCards" id="OR10J4"/>
<dbReference type="HGNC" id="HGNC:15408">
    <property type="gene designation" value="OR10J4"/>
</dbReference>
<dbReference type="neXtProt" id="NX_P0C629"/>
<dbReference type="InParanoid" id="P0C629"/>
<dbReference type="OrthoDB" id="9975554at2759"/>
<dbReference type="PAN-GO" id="P0C629">
    <property type="GO annotations" value="4 GO annotations based on evolutionary models"/>
</dbReference>
<dbReference type="PhylomeDB" id="P0C629"/>
<dbReference type="PathwayCommons" id="P0C629"/>
<dbReference type="Reactome" id="R-HSA-9752946">
    <property type="pathway name" value="Expression and translocation of olfactory receptors"/>
</dbReference>
<dbReference type="Pharos" id="P0C629">
    <property type="development level" value="Tdark"/>
</dbReference>
<dbReference type="PRO" id="PR:P0C629"/>
<dbReference type="Proteomes" id="UP000005640">
    <property type="component" value="Unplaced"/>
</dbReference>
<dbReference type="RNAct" id="P0C629">
    <property type="molecule type" value="protein"/>
</dbReference>
<dbReference type="GO" id="GO:0016020">
    <property type="term" value="C:membrane"/>
    <property type="evidence" value="ECO:0000318"/>
    <property type="project" value="GO_Central"/>
</dbReference>
<dbReference type="GO" id="GO:0005886">
    <property type="term" value="C:plasma membrane"/>
    <property type="evidence" value="ECO:0007669"/>
    <property type="project" value="UniProtKB-SubCell"/>
</dbReference>
<dbReference type="GO" id="GO:0004930">
    <property type="term" value="F:G protein-coupled receptor activity"/>
    <property type="evidence" value="ECO:0007669"/>
    <property type="project" value="UniProtKB-KW"/>
</dbReference>
<dbReference type="GO" id="GO:0005549">
    <property type="term" value="F:odorant binding"/>
    <property type="evidence" value="ECO:0000318"/>
    <property type="project" value="GO_Central"/>
</dbReference>
<dbReference type="GO" id="GO:0004984">
    <property type="term" value="F:olfactory receptor activity"/>
    <property type="evidence" value="ECO:0000318"/>
    <property type="project" value="GO_Central"/>
</dbReference>
<dbReference type="GO" id="GO:0050911">
    <property type="term" value="P:detection of chemical stimulus involved in sensory perception of smell"/>
    <property type="evidence" value="ECO:0000318"/>
    <property type="project" value="GO_Central"/>
</dbReference>
<dbReference type="CDD" id="cd15225">
    <property type="entry name" value="7tmA_OR10A-like"/>
    <property type="match status" value="1"/>
</dbReference>
<dbReference type="FunFam" id="1.20.1070.10:FF:000001">
    <property type="entry name" value="Olfactory receptor"/>
    <property type="match status" value="1"/>
</dbReference>
<dbReference type="Gene3D" id="1.20.1070.10">
    <property type="entry name" value="Rhodopsin 7-helix transmembrane proteins"/>
    <property type="match status" value="1"/>
</dbReference>
<dbReference type="InterPro" id="IPR000276">
    <property type="entry name" value="GPCR_Rhodpsn"/>
</dbReference>
<dbReference type="InterPro" id="IPR017452">
    <property type="entry name" value="GPCR_Rhodpsn_7TM"/>
</dbReference>
<dbReference type="InterPro" id="IPR000725">
    <property type="entry name" value="Olfact_rcpt"/>
</dbReference>
<dbReference type="PANTHER" id="PTHR26453">
    <property type="entry name" value="OLFACTORY RECEPTOR"/>
    <property type="match status" value="1"/>
</dbReference>
<dbReference type="Pfam" id="PF13853">
    <property type="entry name" value="7tm_4"/>
    <property type="match status" value="1"/>
</dbReference>
<dbReference type="PRINTS" id="PR00237">
    <property type="entry name" value="GPCRRHODOPSN"/>
</dbReference>
<dbReference type="PRINTS" id="PR00245">
    <property type="entry name" value="OLFACTORYR"/>
</dbReference>
<dbReference type="SUPFAM" id="SSF81321">
    <property type="entry name" value="Family A G protein-coupled receptor-like"/>
    <property type="match status" value="1"/>
</dbReference>
<dbReference type="PROSITE" id="PS50262">
    <property type="entry name" value="G_PROTEIN_RECEP_F1_2"/>
    <property type="match status" value="1"/>
</dbReference>
<name>O10J4_HUMAN</name>
<sequence>MPRPNFMAVTEFTFEGFSIFEWHHRLILFVIFLVLYVLTLASNAIILIVIRLNHQLHTPMYFFLSVLSISETYYTVAINPQMLSGLLSPQQTISIPGCAAQLFFYLTFGVNKCFLLTAMGYDHYVAICNPLQYSVIMGKKACIQLVSGSWNIGLSTAIIQVSSVFSLPFCDANLISHFFCDIRPIMKLACADTTIKEFITLLISLCVLVLPMVLIFISYVLIVTTILKIASAEGRRKAFATCASHLTVVIVHYGRTSFIYLKPKSQNSLQDRLISVTYTVITPLLNPVVYSLRNKEVKDALLRALGRKPLS</sequence>
<keyword id="KW-1003">Cell membrane</keyword>
<keyword id="KW-1015">Disulfide bond</keyword>
<keyword id="KW-0297">G-protein coupled receptor</keyword>
<keyword id="KW-0472">Membrane</keyword>
<keyword id="KW-0552">Olfaction</keyword>
<keyword id="KW-0675">Receptor</keyword>
<keyword id="KW-1185">Reference proteome</keyword>
<keyword id="KW-0716">Sensory transduction</keyword>
<keyword id="KW-0807">Transducer</keyword>
<keyword id="KW-0812">Transmembrane</keyword>
<keyword id="KW-1133">Transmembrane helix</keyword>
<gene>
    <name type="primary">OR10J4</name>
    <name type="synonym">OR10J4P</name>
</gene>
<comment type="function">
    <text evidence="3">Odorant receptor.</text>
</comment>
<comment type="subcellular location">
    <subcellularLocation>
        <location>Cell membrane</location>
        <topology>Multi-pass membrane protein</topology>
    </subcellularLocation>
</comment>
<comment type="polymorphism">
    <text>A single nucleotide deletion at position Phe-198 in the gene coding for this protein is responsible for functional diversity thus producing a pseudogene.</text>
</comment>
<comment type="similarity">
    <text evidence="2">Belongs to the G-protein coupled receptor 1 family.</text>
</comment>
<comment type="online information" name="Human Olfactory Receptor Data Exploratorium (HORDE)">
    <link uri="http://genome.weizmann.ac.il/horde/card/index/symbol:OR10J4P"/>
</comment>
<accession>P0C629</accession>
<reference key="1">
    <citation type="journal article" date="2006" name="Nature">
        <title>The DNA sequence and biological annotation of human chromosome 1.</title>
        <authorList>
            <person name="Gregory S.G."/>
            <person name="Barlow K.F."/>
            <person name="McLay K.E."/>
            <person name="Kaul R."/>
            <person name="Swarbreck D."/>
            <person name="Dunham A."/>
            <person name="Scott C.E."/>
            <person name="Howe K.L."/>
            <person name="Woodfine K."/>
            <person name="Spencer C.C.A."/>
            <person name="Jones M.C."/>
            <person name="Gillson C."/>
            <person name="Searle S."/>
            <person name="Zhou Y."/>
            <person name="Kokocinski F."/>
            <person name="McDonald L."/>
            <person name="Evans R."/>
            <person name="Phillips K."/>
            <person name="Atkinson A."/>
            <person name="Cooper R."/>
            <person name="Jones C."/>
            <person name="Hall R.E."/>
            <person name="Andrews T.D."/>
            <person name="Lloyd C."/>
            <person name="Ainscough R."/>
            <person name="Almeida J.P."/>
            <person name="Ambrose K.D."/>
            <person name="Anderson F."/>
            <person name="Andrew R.W."/>
            <person name="Ashwell R.I.S."/>
            <person name="Aubin K."/>
            <person name="Babbage A.K."/>
            <person name="Bagguley C.L."/>
            <person name="Bailey J."/>
            <person name="Beasley H."/>
            <person name="Bethel G."/>
            <person name="Bird C.P."/>
            <person name="Bray-Allen S."/>
            <person name="Brown J.Y."/>
            <person name="Brown A.J."/>
            <person name="Buckley D."/>
            <person name="Burton J."/>
            <person name="Bye J."/>
            <person name="Carder C."/>
            <person name="Chapman J.C."/>
            <person name="Clark S.Y."/>
            <person name="Clarke G."/>
            <person name="Clee C."/>
            <person name="Cobley V."/>
            <person name="Collier R.E."/>
            <person name="Corby N."/>
            <person name="Coville G.J."/>
            <person name="Davies J."/>
            <person name="Deadman R."/>
            <person name="Dunn M."/>
            <person name="Earthrowl M."/>
            <person name="Ellington A.G."/>
            <person name="Errington H."/>
            <person name="Frankish A."/>
            <person name="Frankland J."/>
            <person name="French L."/>
            <person name="Garner P."/>
            <person name="Garnett J."/>
            <person name="Gay L."/>
            <person name="Ghori M.R.J."/>
            <person name="Gibson R."/>
            <person name="Gilby L.M."/>
            <person name="Gillett W."/>
            <person name="Glithero R.J."/>
            <person name="Grafham D.V."/>
            <person name="Griffiths C."/>
            <person name="Griffiths-Jones S."/>
            <person name="Grocock R."/>
            <person name="Hammond S."/>
            <person name="Harrison E.S.I."/>
            <person name="Hart E."/>
            <person name="Haugen E."/>
            <person name="Heath P.D."/>
            <person name="Holmes S."/>
            <person name="Holt K."/>
            <person name="Howden P.J."/>
            <person name="Hunt A.R."/>
            <person name="Hunt S.E."/>
            <person name="Hunter G."/>
            <person name="Isherwood J."/>
            <person name="James R."/>
            <person name="Johnson C."/>
            <person name="Johnson D."/>
            <person name="Joy A."/>
            <person name="Kay M."/>
            <person name="Kershaw J.K."/>
            <person name="Kibukawa M."/>
            <person name="Kimberley A.M."/>
            <person name="King A."/>
            <person name="Knights A.J."/>
            <person name="Lad H."/>
            <person name="Laird G."/>
            <person name="Lawlor S."/>
            <person name="Leongamornlert D.A."/>
            <person name="Lloyd D.M."/>
            <person name="Loveland J."/>
            <person name="Lovell J."/>
            <person name="Lush M.J."/>
            <person name="Lyne R."/>
            <person name="Martin S."/>
            <person name="Mashreghi-Mohammadi M."/>
            <person name="Matthews L."/>
            <person name="Matthews N.S.W."/>
            <person name="McLaren S."/>
            <person name="Milne S."/>
            <person name="Mistry S."/>
            <person name="Moore M.J.F."/>
            <person name="Nickerson T."/>
            <person name="O'Dell C.N."/>
            <person name="Oliver K."/>
            <person name="Palmeiri A."/>
            <person name="Palmer S.A."/>
            <person name="Parker A."/>
            <person name="Patel D."/>
            <person name="Pearce A.V."/>
            <person name="Peck A.I."/>
            <person name="Pelan S."/>
            <person name="Phelps K."/>
            <person name="Phillimore B.J."/>
            <person name="Plumb R."/>
            <person name="Rajan J."/>
            <person name="Raymond C."/>
            <person name="Rouse G."/>
            <person name="Saenphimmachak C."/>
            <person name="Sehra H.K."/>
            <person name="Sheridan E."/>
            <person name="Shownkeen R."/>
            <person name="Sims S."/>
            <person name="Skuce C.D."/>
            <person name="Smith M."/>
            <person name="Steward C."/>
            <person name="Subramanian S."/>
            <person name="Sycamore N."/>
            <person name="Tracey A."/>
            <person name="Tromans A."/>
            <person name="Van Helmond Z."/>
            <person name="Wall M."/>
            <person name="Wallis J.M."/>
            <person name="White S."/>
            <person name="Whitehead S.L."/>
            <person name="Wilkinson J.E."/>
            <person name="Willey D.L."/>
            <person name="Williams H."/>
            <person name="Wilming L."/>
            <person name="Wray P.W."/>
            <person name="Wu Z."/>
            <person name="Coulson A."/>
            <person name="Vaudin M."/>
            <person name="Sulston J.E."/>
            <person name="Durbin R.M."/>
            <person name="Hubbard T."/>
            <person name="Wooster R."/>
            <person name="Dunham I."/>
            <person name="Carter N.P."/>
            <person name="McVean G."/>
            <person name="Ross M.T."/>
            <person name="Harrow J."/>
            <person name="Olson M.V."/>
            <person name="Beck S."/>
            <person name="Rogers J."/>
            <person name="Bentley D.R."/>
        </authorList>
    </citation>
    <scope>NUCLEOTIDE SEQUENCE [LARGE SCALE GENOMIC DNA]</scope>
</reference>
<reference key="2">
    <citation type="journal article" date="2002" name="Genomics">
        <title>DEFOG: a practical scheme for deciphering families of genes.</title>
        <authorList>
            <person name="Fuchs T."/>
            <person name="Malecova B."/>
            <person name="Linhart C."/>
            <person name="Sharan R."/>
            <person name="Khen M."/>
            <person name="Herwig R."/>
            <person name="Shmulevich D."/>
            <person name="Elkon R."/>
            <person name="Steinfath M."/>
            <person name="O'Brien J.K."/>
            <person name="Radelof U."/>
            <person name="Lehrach H."/>
            <person name="Lancet D."/>
            <person name="Shamir R."/>
        </authorList>
    </citation>
    <scope>NUCLEOTIDE SEQUENCE [GENOMIC DNA] OF 69-284</scope>
</reference>
<reference key="3">
    <citation type="journal article" date="2007" name="PLoS Biol.">
        <title>Genetic elucidation of human hyperosmia to isovaleric acid.</title>
        <authorList>
            <person name="Menashe I."/>
            <person name="Abaffy T."/>
            <person name="Hasin Y."/>
            <person name="Goshen S."/>
            <person name="Yahalom V."/>
            <person name="Luetje C.W."/>
            <person name="Lancet D."/>
        </authorList>
    </citation>
    <scope>POLYMORPHISM</scope>
</reference>